<dbReference type="EMBL" id="GU290201">
    <property type="protein sequence ID" value="ADB43128.1"/>
    <property type="molecule type" value="mRNA"/>
</dbReference>
<dbReference type="ConoServer" id="3983">
    <property type="toxin name" value="Cal5.1 L1 precursor"/>
</dbReference>
<dbReference type="GO" id="GO:0005576">
    <property type="term" value="C:extracellular region"/>
    <property type="evidence" value="ECO:0007669"/>
    <property type="project" value="UniProtKB-SubCell"/>
</dbReference>
<dbReference type="GO" id="GO:0099106">
    <property type="term" value="F:ion channel regulator activity"/>
    <property type="evidence" value="ECO:0007669"/>
    <property type="project" value="UniProtKB-KW"/>
</dbReference>
<dbReference type="GO" id="GO:0090729">
    <property type="term" value="F:toxin activity"/>
    <property type="evidence" value="ECO:0007669"/>
    <property type="project" value="UniProtKB-KW"/>
</dbReference>
<protein>
    <recommendedName>
        <fullName evidence="3">Conotoxin Cal5a L1</fullName>
    </recommendedName>
    <component>
        <recommendedName>
            <fullName evidence="3">Conotoxin Cal5b L1</fullName>
        </recommendedName>
    </component>
    <component>
        <recommendedName>
            <fullName evidence="3">Conotoxin Cal5.1</fullName>
        </recommendedName>
    </component>
</protein>
<comment type="function">
    <text evidence="4">Probable neurotoxin with unknown target. Possibly targets ion channels.</text>
</comment>
<comment type="subcellular location">
    <subcellularLocation>
        <location evidence="2">Secreted</location>
    </subcellularLocation>
</comment>
<comment type="tissue specificity">
    <text evidence="5">Expressed by the venom duct.</text>
</comment>
<comment type="domain">
    <text evidence="4">The cysteine framework is V (CC-CC).</text>
</comment>
<comment type="PTM">
    <text evidence="4">Contains 2 disulfide bonds that can be either 'C1-C3, C2-C4' or 'C1-C4, C2-C3', since these disulfide connectivities have been observed for conotoxins with cysteine framework V (for examples, see AC P0DQQ7 and AC P81755).</text>
</comment>
<comment type="PTM">
    <text evidence="2">Five different peptides have been described after total venom examination by HPLC-MS. Cal5a is the longest. Cal5b-Cal5e are identical in length but are differentially hydroxylated. It is possible that hydroxylation and proteolysis at position 53 are incomplete in some of these peptides.</text>
</comment>
<comment type="miscellaneous">
    <text>Cal5a-cal5e are found in dissected venom (DV).</text>
</comment>
<feature type="signal peptide" evidence="1">
    <location>
        <begin position="1"/>
        <end position="22"/>
    </location>
</feature>
<feature type="propeptide" id="PRO_5000566287" evidence="5">
    <location>
        <begin position="23"/>
        <end position="42"/>
    </location>
</feature>
<feature type="peptide" id="PRO_0000414960" description="Conotoxin Cal5a L1" evidence="5">
    <location>
        <begin position="44"/>
        <end position="74"/>
    </location>
</feature>
<feature type="peptide" id="PRO_0000414961" description="Conotoxin Cal5b L1" evidence="5">
    <location>
        <begin position="54"/>
        <end position="74"/>
    </location>
</feature>
<feature type="peptide" id="PRO_5000566288" description="Conotoxin Cal5.1" evidence="5">
    <location>
        <begin position="61"/>
        <end position="74"/>
    </location>
</feature>
<feature type="modified residue" description="4-hydroxyproline" evidence="2">
    <location>
        <position position="50"/>
    </location>
</feature>
<feature type="modified residue" description="4-hydroxyproline; in form cal5a, and form cal5b" evidence="2">
    <location>
        <position position="58"/>
    </location>
</feature>
<feature type="modified residue" description="4-hydroxyproline; in form cal5a, form cal5b, and form cal5c" evidence="2">
    <location>
        <position position="62"/>
    </location>
</feature>
<feature type="modified residue" description="4-hydroxyproline; in form cal5a, form cal5b, form cal5c, and form cal5d" evidence="2">
    <location>
        <position position="64"/>
    </location>
</feature>
<organism>
    <name type="scientific">Californiconus californicus</name>
    <name type="common">California cone</name>
    <name type="synonym">Conus californicus</name>
    <dbReference type="NCBI Taxonomy" id="1736779"/>
    <lineage>
        <taxon>Eukaryota</taxon>
        <taxon>Metazoa</taxon>
        <taxon>Spiralia</taxon>
        <taxon>Lophotrochozoa</taxon>
        <taxon>Mollusca</taxon>
        <taxon>Gastropoda</taxon>
        <taxon>Caenogastropoda</taxon>
        <taxon>Neogastropoda</taxon>
        <taxon>Conoidea</taxon>
        <taxon>Conidae</taxon>
        <taxon>Californiconus</taxon>
    </lineage>
</organism>
<keyword id="KW-1015">Disulfide bond</keyword>
<keyword id="KW-0379">Hydroxylation</keyword>
<keyword id="KW-0872">Ion channel impairing toxin</keyword>
<keyword id="KW-0528">Neurotoxin</keyword>
<keyword id="KW-0964">Secreted</keyword>
<keyword id="KW-0732">Signal</keyword>
<keyword id="KW-0800">Toxin</keyword>
<accession>D2Y171</accession>
<proteinExistence type="evidence at protein level"/>
<name>CU5A_CONCL</name>
<reference key="1">
    <citation type="journal article" date="2011" name="Toxicon">
        <title>Diversity of conotoxin types from Conus californicus reflects a diversity of prey types and a novel evolutionary history.</title>
        <authorList>
            <person name="Elliger C.A."/>
            <person name="Richmond T.A."/>
            <person name="Lebaric Z.N."/>
            <person name="Pierce N.T."/>
            <person name="Sweedler J.V."/>
            <person name="Gilly W.F."/>
        </authorList>
    </citation>
    <scope>NUCLEOTIDE SEQUENCE [MRNA]</scope>
    <scope>HYDROXYLATION AT PRO-50; PRO-58; PRO-62 AND PRO-64</scope>
    <scope>SUBCELLULAR LOCATION</scope>
    <scope>IDENTIFICATION BY MASS SPECTROMETRY</scope>
    <source>
        <tissue>Venom</tissue>
        <tissue>Venom duct</tissue>
    </source>
</reference>
<sequence>MRFYIGLMAALMLTSILRTDSASVDQTGAEGGLALIERVIRQRDAADVKPVARTNEGPGRDPAPCCQHPIETCCRR</sequence>
<evidence type="ECO:0000255" key="1"/>
<evidence type="ECO:0000269" key="2">
    <source>
    </source>
</evidence>
<evidence type="ECO:0000303" key="3">
    <source>
    </source>
</evidence>
<evidence type="ECO:0000305" key="4"/>
<evidence type="ECO:0000305" key="5">
    <source>
    </source>
</evidence>